<organism>
    <name type="scientific">Leocottus kesslerii</name>
    <name type="common">Kessler's sculpin</name>
    <name type="synonym">Cottus kesslerii</name>
    <dbReference type="NCBI Taxonomy" id="8099"/>
    <lineage>
        <taxon>Eukaryota</taxon>
        <taxon>Metazoa</taxon>
        <taxon>Chordata</taxon>
        <taxon>Craniata</taxon>
        <taxon>Vertebrata</taxon>
        <taxon>Euteleostomi</taxon>
        <taxon>Actinopterygii</taxon>
        <taxon>Neopterygii</taxon>
        <taxon>Teleostei</taxon>
        <taxon>Neoteleostei</taxon>
        <taxon>Acanthomorphata</taxon>
        <taxon>Eupercaria</taxon>
        <taxon>Perciformes</taxon>
        <taxon>Cottioidei</taxon>
        <taxon>Cottales</taxon>
        <taxon>Cottidae</taxon>
        <taxon>Leocottus</taxon>
    </lineage>
</organism>
<dbReference type="EMBL" id="L42953">
    <property type="protein sequence ID" value="AAB00358.1"/>
    <property type="molecule type" value="Genomic_DNA"/>
</dbReference>
<dbReference type="SMR" id="Q90373"/>
<dbReference type="GlyCosmos" id="Q90373">
    <property type="glycosylation" value="1 site, No reported glycans"/>
</dbReference>
<dbReference type="GO" id="GO:0016020">
    <property type="term" value="C:membrane"/>
    <property type="evidence" value="ECO:0000250"/>
    <property type="project" value="UniProtKB"/>
</dbReference>
<dbReference type="GO" id="GO:0097381">
    <property type="term" value="C:photoreceptor disc membrane"/>
    <property type="evidence" value="ECO:0000250"/>
    <property type="project" value="UniProtKB"/>
</dbReference>
<dbReference type="GO" id="GO:0005886">
    <property type="term" value="C:plasma membrane"/>
    <property type="evidence" value="ECO:0000250"/>
    <property type="project" value="UniProtKB"/>
</dbReference>
<dbReference type="GO" id="GO:0005502">
    <property type="term" value="F:11-cis retinal binding"/>
    <property type="evidence" value="ECO:0000250"/>
    <property type="project" value="UniProtKB"/>
</dbReference>
<dbReference type="GO" id="GO:0008020">
    <property type="term" value="F:G protein-coupled photoreceptor activity"/>
    <property type="evidence" value="ECO:0000250"/>
    <property type="project" value="UniProtKB"/>
</dbReference>
<dbReference type="GO" id="GO:0016038">
    <property type="term" value="P:absorption of visible light"/>
    <property type="evidence" value="ECO:0000250"/>
    <property type="project" value="UniProtKB"/>
</dbReference>
<dbReference type="GO" id="GO:0016056">
    <property type="term" value="P:G protein-coupled opsin signaling pathway"/>
    <property type="evidence" value="ECO:0000250"/>
    <property type="project" value="UniProtKB"/>
</dbReference>
<dbReference type="GO" id="GO:0007601">
    <property type="term" value="P:visual perception"/>
    <property type="evidence" value="ECO:0007669"/>
    <property type="project" value="UniProtKB-KW"/>
</dbReference>
<dbReference type="FunFam" id="1.20.1070.10:FF:000357">
    <property type="entry name" value="Rhodopsin"/>
    <property type="match status" value="1"/>
</dbReference>
<dbReference type="Gene3D" id="1.20.1070.10">
    <property type="entry name" value="Rhodopsin 7-helix transmembrane proteins"/>
    <property type="match status" value="1"/>
</dbReference>
<dbReference type="InterPro" id="IPR050125">
    <property type="entry name" value="GPCR_opsins"/>
</dbReference>
<dbReference type="InterPro" id="IPR000276">
    <property type="entry name" value="GPCR_Rhodpsn"/>
</dbReference>
<dbReference type="InterPro" id="IPR017452">
    <property type="entry name" value="GPCR_Rhodpsn_7TM"/>
</dbReference>
<dbReference type="InterPro" id="IPR001760">
    <property type="entry name" value="Opsin"/>
</dbReference>
<dbReference type="InterPro" id="IPR027430">
    <property type="entry name" value="Retinal_BS"/>
</dbReference>
<dbReference type="InterPro" id="IPR000732">
    <property type="entry name" value="Rhodopsin"/>
</dbReference>
<dbReference type="PANTHER" id="PTHR24240">
    <property type="entry name" value="OPSIN"/>
    <property type="match status" value="1"/>
</dbReference>
<dbReference type="Pfam" id="PF00001">
    <property type="entry name" value="7tm_1"/>
    <property type="match status" value="1"/>
</dbReference>
<dbReference type="PRINTS" id="PR00237">
    <property type="entry name" value="GPCRRHODOPSN"/>
</dbReference>
<dbReference type="PRINTS" id="PR00238">
    <property type="entry name" value="OPSIN"/>
</dbReference>
<dbReference type="PRINTS" id="PR00579">
    <property type="entry name" value="RHODOPSIN"/>
</dbReference>
<dbReference type="SUPFAM" id="SSF81321">
    <property type="entry name" value="Family A G protein-coupled receptor-like"/>
    <property type="match status" value="1"/>
</dbReference>
<dbReference type="PROSITE" id="PS00237">
    <property type="entry name" value="G_PROTEIN_RECEP_F1_1"/>
    <property type="match status" value="1"/>
</dbReference>
<dbReference type="PROSITE" id="PS50262">
    <property type="entry name" value="G_PROTEIN_RECEP_F1_2"/>
    <property type="match status" value="1"/>
</dbReference>
<dbReference type="PROSITE" id="PS00238">
    <property type="entry name" value="OPSIN"/>
    <property type="match status" value="1"/>
</dbReference>
<accession>Q90373</accession>
<comment type="function">
    <text evidence="1 2 3">Photoreceptor required for image-forming vision at low light intensity. While most salt water fish species use retinal as chromophore, most freshwater fish use 3-dehydroretinal, or a mixture of retinal and 3-dehydroretinal (By similarity). Light-induced isomerization of 11-cis to all-trans retinal triggers a conformational change that activates signaling via G-proteins. Subsequent receptor phosphorylation mediates displacement of the bound G-protein alpha subunit by arrestin and terminates signaling (By similarity).</text>
</comment>
<comment type="subcellular location">
    <subcellularLocation>
        <location evidence="2">Membrane</location>
        <topology evidence="2">Multi-pass membrane protein</topology>
    </subcellularLocation>
    <subcellularLocation>
        <location evidence="4">Cell projection</location>
        <location evidence="4">Cilium</location>
        <location evidence="4">Photoreceptor outer segment</location>
    </subcellularLocation>
    <text evidence="2">Synthesized in the inner segment (IS) of rod photoreceptor cells before vectorial transport to disk membranes in the rod outer segment (OS) photosensory cilia.</text>
</comment>
<comment type="PTM">
    <text evidence="1">Phosphorylated on some or all of the serine and threonine residues present in the C-terminal region.</text>
</comment>
<comment type="PTM">
    <text evidence="1">Contains one covalently linked retinal chromophore.</text>
</comment>
<comment type="similarity">
    <text evidence="6">Belongs to the G-protein coupled receptor 1 family. Opsin subfamily.</text>
</comment>
<reference key="1">
    <citation type="journal article" date="1995" name="Gene">
        <title>The rhodopsin-encoding gene of bony fish lacks introns.</title>
        <authorList>
            <person name="Fitzgibbon J."/>
            <person name="Hope A."/>
            <person name="Slobodyanyuk S.J."/>
            <person name="Bellingham J."/>
            <person name="Bowmaker J.K."/>
            <person name="Hunt D.M."/>
        </authorList>
    </citation>
    <scope>NUCLEOTIDE SEQUENCE [GENOMIC DNA]</scope>
    <source>
        <tissue>Liver</tissue>
    </source>
</reference>
<name>OPSD_LEOKE</name>
<gene>
    <name type="primary">rho</name>
</gene>
<evidence type="ECO:0000250" key="1">
    <source>
        <dbReference type="UniProtKB" id="P02699"/>
    </source>
</evidence>
<evidence type="ECO:0000250" key="2">
    <source>
        <dbReference type="UniProtKB" id="P08100"/>
    </source>
</evidence>
<evidence type="ECO:0000250" key="3">
    <source>
        <dbReference type="UniProtKB" id="P32309"/>
    </source>
</evidence>
<evidence type="ECO:0000250" key="4">
    <source>
        <dbReference type="UniProtKB" id="P35359"/>
    </source>
</evidence>
<evidence type="ECO:0000255" key="5"/>
<evidence type="ECO:0000255" key="6">
    <source>
        <dbReference type="PROSITE-ProRule" id="PRU00521"/>
    </source>
</evidence>
<evidence type="ECO:0000305" key="7"/>
<keyword id="KW-0966">Cell projection</keyword>
<keyword id="KW-0157">Chromophore</keyword>
<keyword id="KW-1015">Disulfide bond</keyword>
<keyword id="KW-0297">G-protein coupled receptor</keyword>
<keyword id="KW-0325">Glycoprotein</keyword>
<keyword id="KW-0449">Lipoprotein</keyword>
<keyword id="KW-0472">Membrane</keyword>
<keyword id="KW-0564">Palmitate</keyword>
<keyword id="KW-0597">Phosphoprotein</keyword>
<keyword id="KW-0600">Photoreceptor protein</keyword>
<keyword id="KW-0675">Receptor</keyword>
<keyword id="KW-0681">Retinal protein</keyword>
<keyword id="KW-0716">Sensory transduction</keyword>
<keyword id="KW-0807">Transducer</keyword>
<keyword id="KW-0812">Transmembrane</keyword>
<keyword id="KW-1133">Transmembrane helix</keyword>
<keyword id="KW-0844">Vision</keyword>
<proteinExistence type="inferred from homology"/>
<protein>
    <recommendedName>
        <fullName>Rhodopsin</fullName>
    </recommendedName>
</protein>
<sequence>YLVSPAGYAALGAYMFLLILVGFPVNFLTLYVTLEHKKLRTPLNYILLNLAVADLFMVLGGFTTTMYTSMHGYFVLGRLGCNLEGFFVTLGGEIALWSLVVLAIERWIGVFKSIRNFRFTEDHAIMGLGFSWVMAATCAVPPLVGWLRYIPEGMQCSCGVDYYTRAEGFNNESFVIYMFIVHFLIPLIVIFFCYGRLLCAVKEAAAAQQESETTQRAEKEVSRMVVIMVIGYLVCWLPYASVAWWIFCNQGSEFGPIFMTLPAFFAKSPAIYNPLIYICMNKQFPHCMI</sequence>
<feature type="chain" id="PRO_0000197666" description="Rhodopsin">
    <location>
        <begin position="1" status="less than"/>
        <end position="289" status="greater than"/>
    </location>
</feature>
<feature type="topological domain" description="Extracellular" evidence="7">
    <location>
        <begin position="1" status="less than"/>
        <end position="7"/>
    </location>
</feature>
<feature type="transmembrane region" description="Helical; Name=1" evidence="1">
    <location>
        <begin position="8"/>
        <end position="32"/>
    </location>
</feature>
<feature type="topological domain" description="Cytoplasmic" evidence="7">
    <location>
        <begin position="33"/>
        <end position="44"/>
    </location>
</feature>
<feature type="transmembrane region" description="Helical; Name=2" evidence="1">
    <location>
        <begin position="45"/>
        <end position="67"/>
    </location>
</feature>
<feature type="topological domain" description="Extracellular" evidence="7">
    <location>
        <begin position="68"/>
        <end position="81"/>
    </location>
</feature>
<feature type="transmembrane region" description="Helical; Name=3" evidence="1">
    <location>
        <begin position="82"/>
        <end position="104"/>
    </location>
</feature>
<feature type="topological domain" description="Cytoplasmic" evidence="7">
    <location>
        <begin position="105"/>
        <end position="123"/>
    </location>
</feature>
<feature type="transmembrane region" description="Helical; Name=4" evidence="1">
    <location>
        <begin position="124"/>
        <end position="144"/>
    </location>
</feature>
<feature type="topological domain" description="Extracellular" evidence="7">
    <location>
        <begin position="145"/>
        <end position="173"/>
    </location>
</feature>
<feature type="transmembrane region" description="Helical; Name=5" evidence="1">
    <location>
        <begin position="174"/>
        <end position="195"/>
    </location>
</feature>
<feature type="topological domain" description="Cytoplasmic" evidence="7">
    <location>
        <begin position="196"/>
        <end position="223"/>
    </location>
</feature>
<feature type="transmembrane region" description="Helical; Name=6" evidence="1">
    <location>
        <begin position="224"/>
        <end position="245"/>
    </location>
</feature>
<feature type="topological domain" description="Extracellular" evidence="7">
    <location>
        <begin position="246"/>
        <end position="257"/>
    </location>
</feature>
<feature type="transmembrane region" description="Helical; Name=7" evidence="1">
    <location>
        <begin position="258"/>
        <end position="279"/>
    </location>
</feature>
<feature type="topological domain" description="Cytoplasmic" evidence="7">
    <location>
        <begin position="280"/>
        <end position="289" status="greater than"/>
    </location>
</feature>
<feature type="short sequence motif" description="'Ionic lock' involved in activated form stabilization" evidence="1">
    <location>
        <begin position="105"/>
        <end position="107"/>
    </location>
</feature>
<feature type="site" description="Plays an important role in the conformation switch to the active conformation" evidence="1">
    <location>
        <position position="84"/>
    </location>
</feature>
<feature type="modified residue" description="N6-(retinylidene)lysine" evidence="1">
    <location>
        <position position="267"/>
    </location>
</feature>
<feature type="glycosylation site" description="N-linked (GlcNAc...) asparagine" evidence="5">
    <location>
        <position position="171"/>
    </location>
</feature>
<feature type="disulfide bond" evidence="6">
    <location>
        <begin position="81"/>
        <end position="158"/>
    </location>
</feature>
<feature type="non-terminal residue">
    <location>
        <position position="1"/>
    </location>
</feature>
<feature type="non-terminal residue">
    <location>
        <position position="289"/>
    </location>
</feature>